<comment type="function">
    <text evidence="1">A core subunit of photosystem II (PSII), probably helps stabilize the reaction center.</text>
</comment>
<comment type="subunit">
    <text evidence="2">PSII is composed of 1 copy each of membrane proteins PsbA, PsbB, PsbC, PsbD, PsbE, PsbF, PsbH, PsbI, PsbJ, PsbK, PsbL, PsbM, PsbT, PsbY, PsbZ, Psb30/Ycf12, peripheral proteins of the oxygen-evolving complex and a large number of cofactors. It forms dimeric complexes.</text>
</comment>
<comment type="subcellular location">
    <subcellularLocation>
        <location evidence="1">Plastid</location>
        <location evidence="1">Chloroplast thylakoid membrane</location>
        <topology evidence="1">Single-pass membrane protein</topology>
    </subcellularLocation>
</comment>
<comment type="similarity">
    <text evidence="1">Belongs to the Psb30/Ycf12 family.</text>
</comment>
<proteinExistence type="inferred from homology"/>
<geneLocation type="chloroplast"/>
<accession>Q9MS54</accession>
<protein>
    <recommendedName>
        <fullName evidence="1">Photosystem II reaction center protein Psb30</fullName>
    </recommendedName>
    <alternativeName>
        <fullName evidence="1">Photosystem II reaction center protein Ycf12</fullName>
    </alternativeName>
</protein>
<reference key="1">
    <citation type="journal article" date="2001" name="Mol. Gen. Genet.">
        <title>Comparison of psbK operon organization and group III intron content in chloroplast genomes of 12 Euglenoid species.</title>
        <authorList>
            <person name="Doetsch N.A."/>
            <person name="Thompson M.D."/>
            <person name="Favreau M.R."/>
            <person name="Hallick R.B."/>
        </authorList>
    </citation>
    <scope>NUCLEOTIDE SEQUENCE [GENOMIC DNA]</scope>
    <source>
        <strain>UTEX 85</strain>
    </source>
</reference>
<evidence type="ECO:0000255" key="1">
    <source>
        <dbReference type="HAMAP-Rule" id="MF_01329"/>
    </source>
</evidence>
<evidence type="ECO:0000305" key="2"/>
<gene>
    <name evidence="1" type="primary">psb30</name>
    <name evidence="1" type="synonym">ycf12</name>
</gene>
<feature type="chain" id="PRO_0000059026" description="Photosystem II reaction center protein Psb30">
    <location>
        <begin position="1"/>
        <end position="32"/>
    </location>
</feature>
<feature type="transmembrane region" description="Helical" evidence="1">
    <location>
        <begin position="3"/>
        <end position="23"/>
    </location>
</feature>
<keyword id="KW-0150">Chloroplast</keyword>
<keyword id="KW-0472">Membrane</keyword>
<keyword id="KW-0602">Photosynthesis</keyword>
<keyword id="KW-0604">Photosystem II</keyword>
<keyword id="KW-0934">Plastid</keyword>
<keyword id="KW-0793">Thylakoid</keyword>
<keyword id="KW-0812">Transmembrane</keyword>
<keyword id="KW-1133">Transmembrane helix</keyword>
<name>PSB30_EUGVI</name>
<dbReference type="EMBL" id="AF241284">
    <property type="protein sequence ID" value="AAF82463.1"/>
    <property type="molecule type" value="Genomic_DNA"/>
</dbReference>
<dbReference type="SMR" id="Q9MS54"/>
<dbReference type="GO" id="GO:0009535">
    <property type="term" value="C:chloroplast thylakoid membrane"/>
    <property type="evidence" value="ECO:0007669"/>
    <property type="project" value="UniProtKB-SubCell"/>
</dbReference>
<dbReference type="GO" id="GO:0009523">
    <property type="term" value="C:photosystem II"/>
    <property type="evidence" value="ECO:0007669"/>
    <property type="project" value="UniProtKB-KW"/>
</dbReference>
<dbReference type="GO" id="GO:0015979">
    <property type="term" value="P:photosynthesis"/>
    <property type="evidence" value="ECO:0007669"/>
    <property type="project" value="UniProtKB-KW"/>
</dbReference>
<dbReference type="InterPro" id="IPR010284">
    <property type="entry name" value="PSII_Ycf12_core-subunit"/>
</dbReference>
<dbReference type="NCBIfam" id="NF010239">
    <property type="entry name" value="PRK13686.1"/>
    <property type="match status" value="1"/>
</dbReference>
<dbReference type="Pfam" id="PF05969">
    <property type="entry name" value="PSII_Ycf12"/>
    <property type="match status" value="1"/>
</dbReference>
<sequence length="32" mass="3389">MNIVIVQLGSLALITLAGPIIIVLLFLKQGNL</sequence>
<organism>
    <name type="scientific">Euglena viridis</name>
    <name type="common">Cercaria viridis</name>
    <dbReference type="NCBI Taxonomy" id="3040"/>
    <lineage>
        <taxon>Eukaryota</taxon>
        <taxon>Discoba</taxon>
        <taxon>Euglenozoa</taxon>
        <taxon>Euglenida</taxon>
        <taxon>Spirocuta</taxon>
        <taxon>Euglenophyceae</taxon>
        <taxon>Euglenales</taxon>
        <taxon>Euglenaceae</taxon>
        <taxon>Euglena</taxon>
    </lineage>
</organism>